<keyword id="KW-0030">Aminoacyl-tRNA synthetase</keyword>
<keyword id="KW-0067">ATP-binding</keyword>
<keyword id="KW-0963">Cytoplasm</keyword>
<keyword id="KW-0436">Ligase</keyword>
<keyword id="KW-0479">Metal-binding</keyword>
<keyword id="KW-0547">Nucleotide-binding</keyword>
<keyword id="KW-0648">Protein biosynthesis</keyword>
<keyword id="KW-0694">RNA-binding</keyword>
<keyword id="KW-0820">tRNA-binding</keyword>
<keyword id="KW-0862">Zinc</keyword>
<organism>
    <name type="scientific">Clostridium botulinum (strain Loch Maree / Type A3)</name>
    <dbReference type="NCBI Taxonomy" id="498214"/>
    <lineage>
        <taxon>Bacteria</taxon>
        <taxon>Bacillati</taxon>
        <taxon>Bacillota</taxon>
        <taxon>Clostridia</taxon>
        <taxon>Eubacteriales</taxon>
        <taxon>Clostridiaceae</taxon>
        <taxon>Clostridium</taxon>
    </lineage>
</organism>
<feature type="chain" id="PRO_0000347564" description="Alanine--tRNA ligase">
    <location>
        <begin position="1"/>
        <end position="879"/>
    </location>
</feature>
<feature type="binding site" evidence="1">
    <location>
        <position position="566"/>
    </location>
    <ligand>
        <name>Zn(2+)</name>
        <dbReference type="ChEBI" id="CHEBI:29105"/>
    </ligand>
</feature>
<feature type="binding site" evidence="1">
    <location>
        <position position="570"/>
    </location>
    <ligand>
        <name>Zn(2+)</name>
        <dbReference type="ChEBI" id="CHEBI:29105"/>
    </ligand>
</feature>
<feature type="binding site" evidence="1">
    <location>
        <position position="668"/>
    </location>
    <ligand>
        <name>Zn(2+)</name>
        <dbReference type="ChEBI" id="CHEBI:29105"/>
    </ligand>
</feature>
<feature type="binding site" evidence="1">
    <location>
        <position position="672"/>
    </location>
    <ligand>
        <name>Zn(2+)</name>
        <dbReference type="ChEBI" id="CHEBI:29105"/>
    </ligand>
</feature>
<reference key="1">
    <citation type="journal article" date="2007" name="PLoS ONE">
        <title>Analysis of the neurotoxin complex genes in Clostridium botulinum A1-A4 and B1 strains: BoNT/A3, /Ba4 and /B1 clusters are located within plasmids.</title>
        <authorList>
            <person name="Smith T.J."/>
            <person name="Hill K.K."/>
            <person name="Foley B.T."/>
            <person name="Detter J.C."/>
            <person name="Munk A.C."/>
            <person name="Bruce D.C."/>
            <person name="Doggett N.A."/>
            <person name="Smith L.A."/>
            <person name="Marks J.D."/>
            <person name="Xie G."/>
            <person name="Brettin T.S."/>
        </authorList>
    </citation>
    <scope>NUCLEOTIDE SEQUENCE [LARGE SCALE GENOMIC DNA]</scope>
    <source>
        <strain>Loch Maree / Type A3</strain>
    </source>
</reference>
<protein>
    <recommendedName>
        <fullName evidence="1">Alanine--tRNA ligase</fullName>
        <ecNumber evidence="1">6.1.1.7</ecNumber>
    </recommendedName>
    <alternativeName>
        <fullName evidence="1">Alanyl-tRNA synthetase</fullName>
        <shortName evidence="1">AlaRS</shortName>
    </alternativeName>
</protein>
<comment type="function">
    <text evidence="1">Catalyzes the attachment of alanine to tRNA(Ala) in a two-step reaction: alanine is first activated by ATP to form Ala-AMP and then transferred to the acceptor end of tRNA(Ala). Also edits incorrectly charged Ser-tRNA(Ala) and Gly-tRNA(Ala) via its editing domain.</text>
</comment>
<comment type="catalytic activity">
    <reaction evidence="1">
        <text>tRNA(Ala) + L-alanine + ATP = L-alanyl-tRNA(Ala) + AMP + diphosphate</text>
        <dbReference type="Rhea" id="RHEA:12540"/>
        <dbReference type="Rhea" id="RHEA-COMP:9657"/>
        <dbReference type="Rhea" id="RHEA-COMP:9923"/>
        <dbReference type="ChEBI" id="CHEBI:30616"/>
        <dbReference type="ChEBI" id="CHEBI:33019"/>
        <dbReference type="ChEBI" id="CHEBI:57972"/>
        <dbReference type="ChEBI" id="CHEBI:78442"/>
        <dbReference type="ChEBI" id="CHEBI:78497"/>
        <dbReference type="ChEBI" id="CHEBI:456215"/>
        <dbReference type="EC" id="6.1.1.7"/>
    </reaction>
</comment>
<comment type="cofactor">
    <cofactor evidence="1">
        <name>Zn(2+)</name>
        <dbReference type="ChEBI" id="CHEBI:29105"/>
    </cofactor>
    <text evidence="1">Binds 1 zinc ion per subunit.</text>
</comment>
<comment type="subcellular location">
    <subcellularLocation>
        <location evidence="1">Cytoplasm</location>
    </subcellularLocation>
</comment>
<comment type="domain">
    <text evidence="1">Consists of three domains; the N-terminal catalytic domain, the editing domain and the C-terminal C-Ala domain. The editing domain removes incorrectly charged amino acids, while the C-Ala domain, along with tRNA(Ala), serves as a bridge to cooperatively bring together the editing and aminoacylation centers thus stimulating deacylation of misacylated tRNAs.</text>
</comment>
<comment type="similarity">
    <text evidence="1">Belongs to the class-II aminoacyl-tRNA synthetase family.</text>
</comment>
<dbReference type="EC" id="6.1.1.7" evidence="1"/>
<dbReference type="EMBL" id="CP000962">
    <property type="protein sequence ID" value="ACA53641.1"/>
    <property type="molecule type" value="Genomic_DNA"/>
</dbReference>
<dbReference type="RefSeq" id="WP_012341844.1">
    <property type="nucleotide sequence ID" value="NC_010520.1"/>
</dbReference>
<dbReference type="SMR" id="B1KXB7"/>
<dbReference type="KEGG" id="cbl:CLK_1949"/>
<dbReference type="HOGENOM" id="CLU_004485_1_1_9"/>
<dbReference type="GO" id="GO:0005829">
    <property type="term" value="C:cytosol"/>
    <property type="evidence" value="ECO:0007669"/>
    <property type="project" value="TreeGrafter"/>
</dbReference>
<dbReference type="GO" id="GO:0004813">
    <property type="term" value="F:alanine-tRNA ligase activity"/>
    <property type="evidence" value="ECO:0007669"/>
    <property type="project" value="UniProtKB-UniRule"/>
</dbReference>
<dbReference type="GO" id="GO:0002161">
    <property type="term" value="F:aminoacyl-tRNA deacylase activity"/>
    <property type="evidence" value="ECO:0007669"/>
    <property type="project" value="TreeGrafter"/>
</dbReference>
<dbReference type="GO" id="GO:0005524">
    <property type="term" value="F:ATP binding"/>
    <property type="evidence" value="ECO:0007669"/>
    <property type="project" value="UniProtKB-UniRule"/>
</dbReference>
<dbReference type="GO" id="GO:0140096">
    <property type="term" value="F:catalytic activity, acting on a protein"/>
    <property type="evidence" value="ECO:0007669"/>
    <property type="project" value="UniProtKB-ARBA"/>
</dbReference>
<dbReference type="GO" id="GO:0016740">
    <property type="term" value="F:transferase activity"/>
    <property type="evidence" value="ECO:0007669"/>
    <property type="project" value="UniProtKB-ARBA"/>
</dbReference>
<dbReference type="GO" id="GO:0000049">
    <property type="term" value="F:tRNA binding"/>
    <property type="evidence" value="ECO:0007669"/>
    <property type="project" value="UniProtKB-KW"/>
</dbReference>
<dbReference type="GO" id="GO:0008270">
    <property type="term" value="F:zinc ion binding"/>
    <property type="evidence" value="ECO:0007669"/>
    <property type="project" value="UniProtKB-UniRule"/>
</dbReference>
<dbReference type="GO" id="GO:0006419">
    <property type="term" value="P:alanyl-tRNA aminoacylation"/>
    <property type="evidence" value="ECO:0007669"/>
    <property type="project" value="UniProtKB-UniRule"/>
</dbReference>
<dbReference type="CDD" id="cd00673">
    <property type="entry name" value="AlaRS_core"/>
    <property type="match status" value="1"/>
</dbReference>
<dbReference type="FunFam" id="2.40.30.130:FF:000001">
    <property type="entry name" value="Alanine--tRNA ligase"/>
    <property type="match status" value="1"/>
</dbReference>
<dbReference type="FunFam" id="3.10.310.40:FF:000001">
    <property type="entry name" value="Alanine--tRNA ligase"/>
    <property type="match status" value="1"/>
</dbReference>
<dbReference type="FunFam" id="3.30.54.20:FF:000001">
    <property type="entry name" value="Alanine--tRNA ligase"/>
    <property type="match status" value="1"/>
</dbReference>
<dbReference type="FunFam" id="3.30.930.10:FF:000170">
    <property type="entry name" value="Alanine--tRNA ligase"/>
    <property type="match status" value="1"/>
</dbReference>
<dbReference type="FunFam" id="3.30.980.10:FF:000004">
    <property type="entry name" value="Alanine--tRNA ligase, cytoplasmic"/>
    <property type="match status" value="1"/>
</dbReference>
<dbReference type="Gene3D" id="2.40.30.130">
    <property type="match status" value="1"/>
</dbReference>
<dbReference type="Gene3D" id="3.10.310.40">
    <property type="match status" value="1"/>
</dbReference>
<dbReference type="Gene3D" id="3.30.54.20">
    <property type="match status" value="1"/>
</dbReference>
<dbReference type="Gene3D" id="6.10.250.550">
    <property type="match status" value="1"/>
</dbReference>
<dbReference type="Gene3D" id="3.30.930.10">
    <property type="entry name" value="Bira Bifunctional Protein, Domain 2"/>
    <property type="match status" value="1"/>
</dbReference>
<dbReference type="Gene3D" id="3.30.980.10">
    <property type="entry name" value="Threonyl-trna Synthetase, Chain A, domain 2"/>
    <property type="match status" value="1"/>
</dbReference>
<dbReference type="HAMAP" id="MF_00036_B">
    <property type="entry name" value="Ala_tRNA_synth_B"/>
    <property type="match status" value="1"/>
</dbReference>
<dbReference type="InterPro" id="IPR045864">
    <property type="entry name" value="aa-tRNA-synth_II/BPL/LPL"/>
</dbReference>
<dbReference type="InterPro" id="IPR002318">
    <property type="entry name" value="Ala-tRNA-lgiase_IIc"/>
</dbReference>
<dbReference type="InterPro" id="IPR018162">
    <property type="entry name" value="Ala-tRNA-ligase_IIc_anticod-bd"/>
</dbReference>
<dbReference type="InterPro" id="IPR018165">
    <property type="entry name" value="Ala-tRNA-synth_IIc_core"/>
</dbReference>
<dbReference type="InterPro" id="IPR018164">
    <property type="entry name" value="Ala-tRNA-synth_IIc_N"/>
</dbReference>
<dbReference type="InterPro" id="IPR050058">
    <property type="entry name" value="Ala-tRNA_ligase"/>
</dbReference>
<dbReference type="InterPro" id="IPR023033">
    <property type="entry name" value="Ala_tRNA_ligase_euk/bac"/>
</dbReference>
<dbReference type="InterPro" id="IPR003156">
    <property type="entry name" value="DHHA1_dom"/>
</dbReference>
<dbReference type="InterPro" id="IPR018163">
    <property type="entry name" value="Thr/Ala-tRNA-synth_IIc_edit"/>
</dbReference>
<dbReference type="InterPro" id="IPR009000">
    <property type="entry name" value="Transl_B-barrel_sf"/>
</dbReference>
<dbReference type="InterPro" id="IPR012947">
    <property type="entry name" value="tRNA_SAD"/>
</dbReference>
<dbReference type="NCBIfam" id="TIGR00344">
    <property type="entry name" value="alaS"/>
    <property type="match status" value="1"/>
</dbReference>
<dbReference type="PANTHER" id="PTHR11777:SF9">
    <property type="entry name" value="ALANINE--TRNA LIGASE, CYTOPLASMIC"/>
    <property type="match status" value="1"/>
</dbReference>
<dbReference type="PANTHER" id="PTHR11777">
    <property type="entry name" value="ALANYL-TRNA SYNTHETASE"/>
    <property type="match status" value="1"/>
</dbReference>
<dbReference type="Pfam" id="PF02272">
    <property type="entry name" value="DHHA1"/>
    <property type="match status" value="1"/>
</dbReference>
<dbReference type="Pfam" id="PF01411">
    <property type="entry name" value="tRNA-synt_2c"/>
    <property type="match status" value="1"/>
</dbReference>
<dbReference type="Pfam" id="PF07973">
    <property type="entry name" value="tRNA_SAD"/>
    <property type="match status" value="1"/>
</dbReference>
<dbReference type="PRINTS" id="PR00980">
    <property type="entry name" value="TRNASYNTHALA"/>
</dbReference>
<dbReference type="SMART" id="SM00863">
    <property type="entry name" value="tRNA_SAD"/>
    <property type="match status" value="1"/>
</dbReference>
<dbReference type="SUPFAM" id="SSF55681">
    <property type="entry name" value="Class II aaRS and biotin synthetases"/>
    <property type="match status" value="1"/>
</dbReference>
<dbReference type="SUPFAM" id="SSF101353">
    <property type="entry name" value="Putative anticodon-binding domain of alanyl-tRNA synthetase (AlaRS)"/>
    <property type="match status" value="1"/>
</dbReference>
<dbReference type="SUPFAM" id="SSF55186">
    <property type="entry name" value="ThrRS/AlaRS common domain"/>
    <property type="match status" value="1"/>
</dbReference>
<dbReference type="SUPFAM" id="SSF50447">
    <property type="entry name" value="Translation proteins"/>
    <property type="match status" value="1"/>
</dbReference>
<dbReference type="PROSITE" id="PS50860">
    <property type="entry name" value="AA_TRNA_LIGASE_II_ALA"/>
    <property type="match status" value="1"/>
</dbReference>
<accession>B1KXB7</accession>
<name>SYA_CLOBM</name>
<gene>
    <name evidence="1" type="primary">alaS</name>
    <name type="ordered locus">CLK_1949</name>
</gene>
<sequence>MERMGLNEIREEYLKFFESKAHLRLPSFSLVPKNDKSLLLINAGMAPLKPYFTGLQVPPNKRVTTCQKCVRTGDIENVGKTSRHGTFFEMMGNFSFGDYFKEEVIPWAWEFTTEVLKLPKNKLYVTIYEDDDEALDIWVNKTDVDPKRIFRLGKEDNFWEHGLGPCGPCSEIHFNRGAGEVKTSEEFVKASDEDKIVEFWNLVFTQFDKDEEGNYNKLANPNIDTGMGLERMATIMQNVDTIFEVDTIKAVLDKVCKLSGANYKEDRVKDISIRIITDHIRSITFMISDGILPSNEGRGYVLRRLLRRAARHGKTLGINNTFLHNLTDIVIENCYKNYPELEEKREYIKKIIKLEEERFDETIDAGMQILNDYIKEVKNNNYKVLSGDKAFKLYDTYGFPVELTEEILEEEGISIDKEGFNKEMKEQRERARSAREETNYMGAEDTILNKIDLNINTDFEGYDKLEVKSKVAVIIKDEEFKNEIEKGNEGVIVTYNTPFYAEMGGQIGDTGIIYNDNFKAEVIDCKKNISGKILHFVKILDGKVALEDQVILKVNEGRRNNIRKNHTATHILHAALIKVVGDHVQQSGSYVDDERLRFDFSHFEAVSEDELKEVEKIVNKEIMKANAVNTKVMNIEEAKQQGAIALFDNKYKDDVRVVSVGDFSKELCGGTHVSNSGQIGMFKVVSEAGVAAGIRRIEAVTAFKAMEYVDHKNNILKEAAQILKCNEKELLNKLNHQVLEMKEKEKEIEALKLKLASGAEDEILNNIKEIKGVKVASAAVKDIDGNALRDLGDKIRDNMQSGVVVLGSNYKGKVLFVAMATKDTVAKGVHCGKIIKEVASIAGGGGGGRPDMAQAGGKDPNKLEDAIKTVETVVESLVK</sequence>
<evidence type="ECO:0000255" key="1">
    <source>
        <dbReference type="HAMAP-Rule" id="MF_00036"/>
    </source>
</evidence>
<proteinExistence type="inferred from homology"/>